<organism>
    <name type="scientific">Ateles geoffroyi</name>
    <name type="common">Black-handed spider monkey</name>
    <name type="synonym">Geoffroy's spider monkey</name>
    <dbReference type="NCBI Taxonomy" id="9509"/>
    <lineage>
        <taxon>Eukaryota</taxon>
        <taxon>Metazoa</taxon>
        <taxon>Chordata</taxon>
        <taxon>Craniata</taxon>
        <taxon>Vertebrata</taxon>
        <taxon>Euteleostomi</taxon>
        <taxon>Mammalia</taxon>
        <taxon>Eutheria</taxon>
        <taxon>Euarchontoglires</taxon>
        <taxon>Primates</taxon>
        <taxon>Haplorrhini</taxon>
        <taxon>Platyrrhini</taxon>
        <taxon>Atelidae</taxon>
        <taxon>Atelinae</taxon>
        <taxon>Ateles</taxon>
    </lineage>
</organism>
<evidence type="ECO:0000250" key="1"/>
<evidence type="ECO:0000250" key="2">
    <source>
        <dbReference type="UniProtKB" id="Q15170"/>
    </source>
</evidence>
<evidence type="ECO:0000256" key="3">
    <source>
        <dbReference type="SAM" id="MobiDB-lite"/>
    </source>
</evidence>
<evidence type="ECO:0000305" key="4"/>
<dbReference type="EMBL" id="DQ976618">
    <property type="protein sequence ID" value="ABM65945.1"/>
    <property type="molecule type" value="Genomic_DNA"/>
</dbReference>
<dbReference type="OrthoDB" id="9537246at2759"/>
<dbReference type="GO" id="GO:0005634">
    <property type="term" value="C:nucleus"/>
    <property type="evidence" value="ECO:0007669"/>
    <property type="project" value="UniProtKB-SubCell"/>
</dbReference>
<dbReference type="InterPro" id="IPR021156">
    <property type="entry name" value="TF_A-like/BEX"/>
</dbReference>
<dbReference type="Pfam" id="PF04538">
    <property type="entry name" value="BEX"/>
    <property type="match status" value="1"/>
</dbReference>
<proteinExistence type="inferred from homology"/>
<name>TCAL1_ATEGE</name>
<gene>
    <name evidence="2" type="primary">TCEAL1</name>
</gene>
<sequence>MDKPRKENEEEPQSAPKTDEERPPVEHSPEKQSLEEQSSEEQSSEEEFFPEELLPELLPEMLLSEERPPQEGLSRKDLFEGRPPMEQPPCGVGKHKLEEGSFKERLARSRPQFRGDIHGRNLSNEEMIQAADELEEMKRVRNKLMIMHWKAKRSRPYPI</sequence>
<protein>
    <recommendedName>
        <fullName evidence="2">Transcription elongation factor A protein-like 1</fullName>
        <shortName>TCEA-like protein 1</shortName>
    </recommendedName>
    <alternativeName>
        <fullName>Transcription elongation factor S-II protein-like 1</fullName>
    </alternativeName>
</protein>
<keyword id="KW-0539">Nucleus</keyword>
<keyword id="KW-0804">Transcription</keyword>
<keyword id="KW-0805">Transcription regulation</keyword>
<feature type="chain" id="PRO_0000285497" description="Transcription elongation factor A protein-like 1">
    <location>
        <begin position="1"/>
        <end position="159"/>
    </location>
</feature>
<feature type="region of interest" description="Disordered" evidence="3">
    <location>
        <begin position="1"/>
        <end position="99"/>
    </location>
</feature>
<feature type="compositionally biased region" description="Basic and acidic residues" evidence="3">
    <location>
        <begin position="17"/>
        <end position="34"/>
    </location>
</feature>
<feature type="compositionally biased region" description="Acidic residues" evidence="3">
    <location>
        <begin position="37"/>
        <end position="54"/>
    </location>
</feature>
<feature type="compositionally biased region" description="Basic and acidic residues" evidence="3">
    <location>
        <begin position="64"/>
        <end position="80"/>
    </location>
</feature>
<accession>A2D4U8</accession>
<reference key="1">
    <citation type="submission" date="2006-08" db="EMBL/GenBank/DDBJ databases">
        <title>Positive selection in transcription factor genes on the human lineage.</title>
        <authorList>
            <person name="Nickel G.C."/>
            <person name="Tefft D.L."/>
            <person name="Trevarthen K."/>
            <person name="Funt J."/>
            <person name="Adams M.D."/>
        </authorList>
    </citation>
    <scope>NUCLEOTIDE SEQUENCE [GENOMIC DNA]</scope>
</reference>
<comment type="function">
    <text evidence="1">May be involved in transcriptional regulation. Modulates various viral and cellular promoters in a promoter context-dependent manner. Does not bind DNA directly (By similarity).</text>
</comment>
<comment type="subcellular location">
    <subcellularLocation>
        <location evidence="1">Nucleus</location>
    </subcellularLocation>
</comment>
<comment type="similarity">
    <text evidence="4">Belongs to the TFS-II family. TFA subfamily.</text>
</comment>